<evidence type="ECO:0007829" key="1">
    <source>
        <dbReference type="PDB" id="6HP5"/>
    </source>
</evidence>
<evidence type="ECO:0007829" key="2">
    <source>
        <dbReference type="PDB" id="6HP7"/>
    </source>
</evidence>
<reference key="1">
    <citation type="journal article" date="1997" name="Nature">
        <title>The complete genome sequence of the Gram-positive bacterium Bacillus subtilis.</title>
        <authorList>
            <person name="Kunst F."/>
            <person name="Ogasawara N."/>
            <person name="Moszer I."/>
            <person name="Albertini A.M."/>
            <person name="Alloni G."/>
            <person name="Azevedo V."/>
            <person name="Bertero M.G."/>
            <person name="Bessieres P."/>
            <person name="Bolotin A."/>
            <person name="Borchert S."/>
            <person name="Borriss R."/>
            <person name="Boursier L."/>
            <person name="Brans A."/>
            <person name="Braun M."/>
            <person name="Brignell S.C."/>
            <person name="Bron S."/>
            <person name="Brouillet S."/>
            <person name="Bruschi C.V."/>
            <person name="Caldwell B."/>
            <person name="Capuano V."/>
            <person name="Carter N.M."/>
            <person name="Choi S.-K."/>
            <person name="Codani J.-J."/>
            <person name="Connerton I.F."/>
            <person name="Cummings N.J."/>
            <person name="Daniel R.A."/>
            <person name="Denizot F."/>
            <person name="Devine K.M."/>
            <person name="Duesterhoeft A."/>
            <person name="Ehrlich S.D."/>
            <person name="Emmerson P.T."/>
            <person name="Entian K.-D."/>
            <person name="Errington J."/>
            <person name="Fabret C."/>
            <person name="Ferrari E."/>
            <person name="Foulger D."/>
            <person name="Fritz C."/>
            <person name="Fujita M."/>
            <person name="Fujita Y."/>
            <person name="Fuma S."/>
            <person name="Galizzi A."/>
            <person name="Galleron N."/>
            <person name="Ghim S.-Y."/>
            <person name="Glaser P."/>
            <person name="Goffeau A."/>
            <person name="Golightly E.J."/>
            <person name="Grandi G."/>
            <person name="Guiseppi G."/>
            <person name="Guy B.J."/>
            <person name="Haga K."/>
            <person name="Haiech J."/>
            <person name="Harwood C.R."/>
            <person name="Henaut A."/>
            <person name="Hilbert H."/>
            <person name="Holsappel S."/>
            <person name="Hosono S."/>
            <person name="Hullo M.-F."/>
            <person name="Itaya M."/>
            <person name="Jones L.-M."/>
            <person name="Joris B."/>
            <person name="Karamata D."/>
            <person name="Kasahara Y."/>
            <person name="Klaerr-Blanchard M."/>
            <person name="Klein C."/>
            <person name="Kobayashi Y."/>
            <person name="Koetter P."/>
            <person name="Koningstein G."/>
            <person name="Krogh S."/>
            <person name="Kumano M."/>
            <person name="Kurita K."/>
            <person name="Lapidus A."/>
            <person name="Lardinois S."/>
            <person name="Lauber J."/>
            <person name="Lazarevic V."/>
            <person name="Lee S.-M."/>
            <person name="Levine A."/>
            <person name="Liu H."/>
            <person name="Masuda S."/>
            <person name="Mauel C."/>
            <person name="Medigue C."/>
            <person name="Medina N."/>
            <person name="Mellado R.P."/>
            <person name="Mizuno M."/>
            <person name="Moestl D."/>
            <person name="Nakai S."/>
            <person name="Noback M."/>
            <person name="Noone D."/>
            <person name="O'Reilly M."/>
            <person name="Ogawa K."/>
            <person name="Ogiwara A."/>
            <person name="Oudega B."/>
            <person name="Park S.-H."/>
            <person name="Parro V."/>
            <person name="Pohl T.M."/>
            <person name="Portetelle D."/>
            <person name="Porwollik S."/>
            <person name="Prescott A.M."/>
            <person name="Presecan E."/>
            <person name="Pujic P."/>
            <person name="Purnelle B."/>
            <person name="Rapoport G."/>
            <person name="Rey M."/>
            <person name="Reynolds S."/>
            <person name="Rieger M."/>
            <person name="Rivolta C."/>
            <person name="Rocha E."/>
            <person name="Roche B."/>
            <person name="Rose M."/>
            <person name="Sadaie Y."/>
            <person name="Sato T."/>
            <person name="Scanlan E."/>
            <person name="Schleich S."/>
            <person name="Schroeter R."/>
            <person name="Scoffone F."/>
            <person name="Sekiguchi J."/>
            <person name="Sekowska A."/>
            <person name="Seror S.J."/>
            <person name="Serror P."/>
            <person name="Shin B.-S."/>
            <person name="Soldo B."/>
            <person name="Sorokin A."/>
            <person name="Tacconi E."/>
            <person name="Takagi T."/>
            <person name="Takahashi H."/>
            <person name="Takemaru K."/>
            <person name="Takeuchi M."/>
            <person name="Tamakoshi A."/>
            <person name="Tanaka T."/>
            <person name="Terpstra P."/>
            <person name="Tognoni A."/>
            <person name="Tosato V."/>
            <person name="Uchiyama S."/>
            <person name="Vandenbol M."/>
            <person name="Vannier F."/>
            <person name="Vassarotti A."/>
            <person name="Viari A."/>
            <person name="Wambutt R."/>
            <person name="Wedler E."/>
            <person name="Wedler H."/>
            <person name="Weitzenegger T."/>
            <person name="Winters P."/>
            <person name="Wipat A."/>
            <person name="Yamamoto H."/>
            <person name="Yamane K."/>
            <person name="Yasumoto K."/>
            <person name="Yata K."/>
            <person name="Yoshida K."/>
            <person name="Yoshikawa H.-F."/>
            <person name="Zumstein E."/>
            <person name="Yoshikawa H."/>
            <person name="Danchin A."/>
        </authorList>
    </citation>
    <scope>NUCLEOTIDE SEQUENCE [LARGE SCALE GENOMIC DNA]</scope>
    <source>
        <strain>168</strain>
    </source>
</reference>
<feature type="chain" id="PRO_0000360468" description="SPbeta prophage-derived uncharacterized protein YopK">
    <location>
        <begin position="1"/>
        <end position="386"/>
    </location>
</feature>
<feature type="helix" evidence="2">
    <location>
        <begin position="3"/>
        <end position="14"/>
    </location>
</feature>
<feature type="helix" evidence="2">
    <location>
        <begin position="18"/>
        <end position="25"/>
    </location>
</feature>
<feature type="strand" evidence="2">
    <location>
        <begin position="29"/>
        <end position="31"/>
    </location>
</feature>
<feature type="helix" evidence="2">
    <location>
        <begin position="32"/>
        <end position="39"/>
    </location>
</feature>
<feature type="helix" evidence="2">
    <location>
        <begin position="49"/>
        <end position="58"/>
    </location>
</feature>
<feature type="helix" evidence="2">
    <location>
        <begin position="60"/>
        <end position="62"/>
    </location>
</feature>
<feature type="helix" evidence="2">
    <location>
        <begin position="63"/>
        <end position="72"/>
    </location>
</feature>
<feature type="helix" evidence="2">
    <location>
        <begin position="79"/>
        <end position="90"/>
    </location>
</feature>
<feature type="helix" evidence="2">
    <location>
        <begin position="94"/>
        <end position="105"/>
    </location>
</feature>
<feature type="helix" evidence="2">
    <location>
        <begin position="110"/>
        <end position="126"/>
    </location>
</feature>
<feature type="helix" evidence="2">
    <location>
        <begin position="132"/>
        <end position="141"/>
    </location>
</feature>
<feature type="helix" evidence="2">
    <location>
        <begin position="147"/>
        <end position="163"/>
    </location>
</feature>
<feature type="helix" evidence="2">
    <location>
        <begin position="170"/>
        <end position="176"/>
    </location>
</feature>
<feature type="helix" evidence="2">
    <location>
        <begin position="179"/>
        <end position="181"/>
    </location>
</feature>
<feature type="helix" evidence="2">
    <location>
        <begin position="186"/>
        <end position="206"/>
    </location>
</feature>
<feature type="helix" evidence="2">
    <location>
        <begin position="210"/>
        <end position="223"/>
    </location>
</feature>
<feature type="helix" evidence="2">
    <location>
        <begin position="227"/>
        <end position="241"/>
    </location>
</feature>
<feature type="turn" evidence="2">
    <location>
        <begin position="242"/>
        <end position="244"/>
    </location>
</feature>
<feature type="helix" evidence="2">
    <location>
        <begin position="246"/>
        <end position="260"/>
    </location>
</feature>
<feature type="helix" evidence="2">
    <location>
        <begin position="264"/>
        <end position="280"/>
    </location>
</feature>
<feature type="helix" evidence="2">
    <location>
        <begin position="295"/>
        <end position="307"/>
    </location>
</feature>
<feature type="helix" evidence="2">
    <location>
        <begin position="311"/>
        <end position="322"/>
    </location>
</feature>
<feature type="helix" evidence="2">
    <location>
        <begin position="328"/>
        <end position="342"/>
    </location>
</feature>
<feature type="helix" evidence="2">
    <location>
        <begin position="345"/>
        <end position="357"/>
    </location>
</feature>
<feature type="turn" evidence="1">
    <location>
        <begin position="361"/>
        <end position="364"/>
    </location>
</feature>
<feature type="helix" evidence="2">
    <location>
        <begin position="365"/>
        <end position="373"/>
    </location>
</feature>
<feature type="helix" evidence="2">
    <location>
        <begin position="378"/>
        <end position="383"/>
    </location>
</feature>
<keyword id="KW-0002">3D-structure</keyword>
<keyword id="KW-1185">Reference proteome</keyword>
<name>YOPK_BACSU</name>
<accession>O31927</accession>
<protein>
    <recommendedName>
        <fullName>SPbeta prophage-derived uncharacterized protein YopK</fullName>
    </recommendedName>
</protein>
<proteinExistence type="evidence at protein level"/>
<gene>
    <name type="primary">yopK</name>
    <name type="ordered locus">BSU20860</name>
</gene>
<sequence>MELIRIAMKKDLENDNSLMNKWATVAGLKNPNPLYDFLNHDGKTFNEFSSIVNIVKSQYPDREYELMKDYCLNLDVKTKAARSALEYADANMFFEIEDVLIDSMISCSNMKSKEYGKVYKIHRELSNSVITEFEAVKRLGKLNIKTPEMNSFSRLLLLYHYLSTGNFSPMAQLIKQIDLSEISENMYIRNTYQTRVHVLMSNIKLNENSLEECREYSKKALESTNILRFQVFSYLTIGNSLLFSNYELAQENFLKGLSISVQNENYNMIFQQALCFLNNVWRKENKWINFESDSIMDLQEQAHCFINFNENSKAKEVLDKLDLLVHNDNELAMHYYLKGRLEQNKACFYSSIEYFKKSNDKFLIRLPLLELQKMGENQKLLELLLL</sequence>
<dbReference type="EMBL" id="AL009126">
    <property type="protein sequence ID" value="CAB14004.1"/>
    <property type="molecule type" value="Genomic_DNA"/>
</dbReference>
<dbReference type="RefSeq" id="WP_009968986.1">
    <property type="nucleotide sequence ID" value="NZ_OZ025638.1"/>
</dbReference>
<dbReference type="PDB" id="6HP3">
    <property type="method" value="X-ray"/>
    <property type="resolution" value="2.70 A"/>
    <property type="chains" value="A/B/C/D/E/F/G/H=1-386"/>
</dbReference>
<dbReference type="PDB" id="6HP5">
    <property type="method" value="X-ray"/>
    <property type="resolution" value="2.28 A"/>
    <property type="chains" value="A/B=1-386"/>
</dbReference>
<dbReference type="PDB" id="6HP7">
    <property type="method" value="X-ray"/>
    <property type="resolution" value="2.20 A"/>
    <property type="chains" value="A/B=1-386"/>
</dbReference>
<dbReference type="PDBsum" id="6HP3"/>
<dbReference type="PDBsum" id="6HP5"/>
<dbReference type="PDBsum" id="6HP7"/>
<dbReference type="SMR" id="O31927"/>
<dbReference type="FunCoup" id="O31927">
    <property type="interactions" value="13"/>
</dbReference>
<dbReference type="IntAct" id="O31927">
    <property type="interactions" value="1"/>
</dbReference>
<dbReference type="STRING" id="224308.BSU20860"/>
<dbReference type="PaxDb" id="224308-BSU20860"/>
<dbReference type="EnsemblBacteria" id="CAB14004">
    <property type="protein sequence ID" value="CAB14004"/>
    <property type="gene ID" value="BSU_20860"/>
</dbReference>
<dbReference type="GeneID" id="939187"/>
<dbReference type="KEGG" id="bsu:BSU20860"/>
<dbReference type="PATRIC" id="fig|224308.179.peg.2276"/>
<dbReference type="InParanoid" id="O31927"/>
<dbReference type="OrthoDB" id="2898304at2"/>
<dbReference type="BioCyc" id="BSUB:BSU20860-MONOMER"/>
<dbReference type="Proteomes" id="UP000001570">
    <property type="component" value="Chromosome"/>
</dbReference>
<dbReference type="InterPro" id="IPR047705">
    <property type="entry name" value="AimR-like"/>
</dbReference>
<dbReference type="NCBIfam" id="NF038310">
    <property type="entry name" value="lysogeny_AimR"/>
    <property type="match status" value="1"/>
</dbReference>
<dbReference type="Pfam" id="PF22871">
    <property type="entry name" value="AimR"/>
    <property type="match status" value="1"/>
</dbReference>
<organism>
    <name type="scientific">Bacillus subtilis (strain 168)</name>
    <dbReference type="NCBI Taxonomy" id="224308"/>
    <lineage>
        <taxon>Bacteria</taxon>
        <taxon>Bacillati</taxon>
        <taxon>Bacillota</taxon>
        <taxon>Bacilli</taxon>
        <taxon>Bacillales</taxon>
        <taxon>Bacillaceae</taxon>
        <taxon>Bacillus</taxon>
    </lineage>
</organism>